<gene>
    <name type="primary">eif3m</name>
    <name type="ORF">TGas135n07.1</name>
</gene>
<accession>Q6DK91</accession>
<protein>
    <recommendedName>
        <fullName evidence="1">Eukaryotic translation initiation factor 3 subunit M</fullName>
        <shortName evidence="1">eIF3m</shortName>
    </recommendedName>
</protein>
<reference key="1">
    <citation type="submission" date="2006-10" db="EMBL/GenBank/DDBJ databases">
        <authorList>
            <consortium name="Sanger Xenopus tropicalis EST/cDNA project"/>
        </authorList>
    </citation>
    <scope>NUCLEOTIDE SEQUENCE [LARGE SCALE MRNA]</scope>
    <source>
        <tissue>Gastrula</tissue>
    </source>
</reference>
<reference key="2">
    <citation type="submission" date="2004-06" db="EMBL/GenBank/DDBJ databases">
        <authorList>
            <consortium name="NIH - Xenopus Gene Collection (XGC) project"/>
        </authorList>
    </citation>
    <scope>NUCLEOTIDE SEQUENCE [LARGE SCALE MRNA]</scope>
    <source>
        <tissue>Embryo</tissue>
    </source>
</reference>
<comment type="function">
    <text evidence="1">Component of the eukaryotic translation initiation factor 3 (eIF-3) complex, which is involved in protein synthesis of a specialized repertoire of mRNAs and, together with other initiation factors, stimulates binding of mRNA and methionyl-tRNAi to the 40S ribosome. The eIF-3 complex specifically targets and initiates translation of a subset of mRNAs involved in cell proliferation.</text>
</comment>
<comment type="subunit">
    <text evidence="1">Component of the eukaryotic translation initiation factor 3 (eIF-3) complex, which is composed of 13 subunits: eif3a, eif3b, eif3c, eif3d, eif3e, eif3f, eif3g, eif3h, eif3i, eif3j, eif3k, eif3l and eif3m.</text>
</comment>
<comment type="subcellular location">
    <subcellularLocation>
        <location evidence="1">Cytoplasm</location>
    </subcellularLocation>
</comment>
<comment type="similarity">
    <text evidence="1">Belongs to the eIF-3 subunit M family.</text>
</comment>
<sequence>MSVPAFIDVTEEDQAAELRAYLKSKGAEISEENSEGGLHIDLAQIIEACDVCLKDDDKDVESSMNSVVSLVLILETDKQEALIESLCEKLVKFREGERPSLRLQLLSNLFHGMDKSIPARYTVYCGLIKVAATCGAIIYIPTDLDQVRKWISDWNLSTEKKHIVLRLLYEALVDCKKSDEAAKVMVELLGSYTDDNASQARLDAHKCIVRALKDPKAFLLDHLLALKPVKFLEGELIHDLLTIFVSAKLSSYVKFYQNNKDFIDSLGLSHEQNMEKMRLLTFMGMAVDNKEISFDTIQQELQIGADEVEAFIIDAVKTKMVYCKIDQTQKRVVVSHSTHRTFGKQQWQQLYDTLNTWKQNLNKVKNSLYSISDA</sequence>
<evidence type="ECO:0000255" key="1">
    <source>
        <dbReference type="HAMAP-Rule" id="MF_03012"/>
    </source>
</evidence>
<evidence type="ECO:0000255" key="2">
    <source>
        <dbReference type="PROSITE-ProRule" id="PRU01185"/>
    </source>
</evidence>
<keyword id="KW-0963">Cytoplasm</keyword>
<keyword id="KW-0396">Initiation factor</keyword>
<keyword id="KW-0648">Protein biosynthesis</keyword>
<keyword id="KW-1185">Reference proteome</keyword>
<name>EIF3M_XENTR</name>
<dbReference type="EMBL" id="CR761845">
    <property type="protein sequence ID" value="CAJ83840.1"/>
    <property type="molecule type" value="mRNA"/>
</dbReference>
<dbReference type="EMBL" id="BC074530">
    <property type="protein sequence ID" value="AAH74530.1"/>
    <property type="molecule type" value="mRNA"/>
</dbReference>
<dbReference type="RefSeq" id="NP_001004794.1">
    <property type="nucleotide sequence ID" value="NM_001004794.1"/>
</dbReference>
<dbReference type="SMR" id="Q6DK91"/>
<dbReference type="FunCoup" id="Q6DK91">
    <property type="interactions" value="2757"/>
</dbReference>
<dbReference type="STRING" id="8364.ENSXETP00000029179"/>
<dbReference type="PaxDb" id="8364-ENSXETP00000017921"/>
<dbReference type="DNASU" id="448014"/>
<dbReference type="GeneID" id="448014"/>
<dbReference type="KEGG" id="xtr:448014"/>
<dbReference type="AGR" id="Xenbase:XB-GENE-968605"/>
<dbReference type="CTD" id="10480"/>
<dbReference type="Xenbase" id="XB-GENE-968605">
    <property type="gene designation" value="eif3m"/>
</dbReference>
<dbReference type="eggNOG" id="KOG2753">
    <property type="taxonomic scope" value="Eukaryota"/>
</dbReference>
<dbReference type="HOGENOM" id="CLU_035254_1_0_1"/>
<dbReference type="InParanoid" id="Q6DK91"/>
<dbReference type="OMA" id="VCLKALW"/>
<dbReference type="OrthoDB" id="10267031at2759"/>
<dbReference type="PhylomeDB" id="Q6DK91"/>
<dbReference type="TreeFam" id="TF106148"/>
<dbReference type="Reactome" id="R-XTR-156827">
    <property type="pathway name" value="L13a-mediated translational silencing of Ceruloplasmin expression"/>
</dbReference>
<dbReference type="Reactome" id="R-XTR-72689">
    <property type="pathway name" value="Formation of a pool of free 40S subunits"/>
</dbReference>
<dbReference type="Reactome" id="R-XTR-72695">
    <property type="pathway name" value="Formation of the ternary complex, and subsequently, the 43S complex"/>
</dbReference>
<dbReference type="Reactome" id="R-XTR-72702">
    <property type="pathway name" value="Ribosomal scanning and start codon recognition"/>
</dbReference>
<dbReference type="Proteomes" id="UP000008143">
    <property type="component" value="Chromosome 4"/>
</dbReference>
<dbReference type="Bgee" id="ENSXETG00000008167">
    <property type="expression patterns" value="Expressed in neurula embryo and 23 other cell types or tissues"/>
</dbReference>
<dbReference type="GO" id="GO:0016282">
    <property type="term" value="C:eukaryotic 43S preinitiation complex"/>
    <property type="evidence" value="ECO:0007669"/>
    <property type="project" value="UniProtKB-UniRule"/>
</dbReference>
<dbReference type="GO" id="GO:0033290">
    <property type="term" value="C:eukaryotic 48S preinitiation complex"/>
    <property type="evidence" value="ECO:0007669"/>
    <property type="project" value="UniProtKB-UniRule"/>
</dbReference>
<dbReference type="GO" id="GO:0071541">
    <property type="term" value="C:eukaryotic translation initiation factor 3 complex, eIF3m"/>
    <property type="evidence" value="ECO:0007669"/>
    <property type="project" value="UniProtKB-UniRule"/>
</dbReference>
<dbReference type="GO" id="GO:0003743">
    <property type="term" value="F:translation initiation factor activity"/>
    <property type="evidence" value="ECO:0007669"/>
    <property type="project" value="UniProtKB-UniRule"/>
</dbReference>
<dbReference type="GO" id="GO:0001732">
    <property type="term" value="P:formation of cytoplasmic translation initiation complex"/>
    <property type="evidence" value="ECO:0007669"/>
    <property type="project" value="UniProtKB-UniRule"/>
</dbReference>
<dbReference type="HAMAP" id="MF_03012">
    <property type="entry name" value="eIF3m"/>
    <property type="match status" value="1"/>
</dbReference>
<dbReference type="InterPro" id="IPR016024">
    <property type="entry name" value="ARM-type_fold"/>
</dbReference>
<dbReference type="InterPro" id="IPR045237">
    <property type="entry name" value="COPS7/eIF3m"/>
</dbReference>
<dbReference type="InterPro" id="IPR027528">
    <property type="entry name" value="eIF3m"/>
</dbReference>
<dbReference type="InterPro" id="IPR040750">
    <property type="entry name" value="eIF3m_C_helix"/>
</dbReference>
<dbReference type="InterPro" id="IPR000717">
    <property type="entry name" value="PCI_dom"/>
</dbReference>
<dbReference type="InterPro" id="IPR036390">
    <property type="entry name" value="WH_DNA-bd_sf"/>
</dbReference>
<dbReference type="PANTHER" id="PTHR15350">
    <property type="entry name" value="COP9 SIGNALOSOME COMPLEX SUBUNIT 7/DENDRITIC CELL PROTEIN GA17"/>
    <property type="match status" value="1"/>
</dbReference>
<dbReference type="PANTHER" id="PTHR15350:SF2">
    <property type="entry name" value="EUKARYOTIC TRANSLATION INITIATION FACTOR 3 SUBUNIT M"/>
    <property type="match status" value="1"/>
</dbReference>
<dbReference type="Pfam" id="PF18005">
    <property type="entry name" value="eIF3m_C_helix"/>
    <property type="match status" value="1"/>
</dbReference>
<dbReference type="Pfam" id="PF01399">
    <property type="entry name" value="PCI"/>
    <property type="match status" value="1"/>
</dbReference>
<dbReference type="SMART" id="SM00088">
    <property type="entry name" value="PINT"/>
    <property type="match status" value="1"/>
</dbReference>
<dbReference type="SUPFAM" id="SSF48371">
    <property type="entry name" value="ARM repeat"/>
    <property type="match status" value="1"/>
</dbReference>
<dbReference type="SUPFAM" id="SSF46785">
    <property type="entry name" value="Winged helix' DNA-binding domain"/>
    <property type="match status" value="1"/>
</dbReference>
<dbReference type="PROSITE" id="PS50250">
    <property type="entry name" value="PCI"/>
    <property type="match status" value="1"/>
</dbReference>
<organism>
    <name type="scientific">Xenopus tropicalis</name>
    <name type="common">Western clawed frog</name>
    <name type="synonym">Silurana tropicalis</name>
    <dbReference type="NCBI Taxonomy" id="8364"/>
    <lineage>
        <taxon>Eukaryota</taxon>
        <taxon>Metazoa</taxon>
        <taxon>Chordata</taxon>
        <taxon>Craniata</taxon>
        <taxon>Vertebrata</taxon>
        <taxon>Euteleostomi</taxon>
        <taxon>Amphibia</taxon>
        <taxon>Batrachia</taxon>
        <taxon>Anura</taxon>
        <taxon>Pipoidea</taxon>
        <taxon>Pipidae</taxon>
        <taxon>Xenopodinae</taxon>
        <taxon>Xenopus</taxon>
        <taxon>Silurana</taxon>
    </lineage>
</organism>
<feature type="chain" id="PRO_0000308201" description="Eukaryotic translation initiation factor 3 subunit M">
    <location>
        <begin position="1"/>
        <end position="374"/>
    </location>
</feature>
<feature type="domain" description="PCI" evidence="2">
    <location>
        <begin position="180"/>
        <end position="339"/>
    </location>
</feature>
<proteinExistence type="evidence at transcript level"/>